<protein>
    <recommendedName>
        <fullName evidence="1">L-rhamnose isomerase</fullName>
        <ecNumber evidence="1">5.3.1.14</ecNumber>
    </recommendedName>
</protein>
<comment type="function">
    <text evidence="1">Catalyzes the interconversion of L-rhamnose and L-rhamnulose.</text>
</comment>
<comment type="catalytic activity">
    <reaction evidence="1">
        <text>L-rhamnopyranose = L-rhamnulose</text>
        <dbReference type="Rhea" id="RHEA:23160"/>
        <dbReference type="ChEBI" id="CHEBI:17897"/>
        <dbReference type="ChEBI" id="CHEBI:62346"/>
        <dbReference type="EC" id="5.3.1.14"/>
    </reaction>
</comment>
<comment type="cofactor">
    <cofactor evidence="1">
        <name>Mn(2+)</name>
        <dbReference type="ChEBI" id="CHEBI:29035"/>
    </cofactor>
    <text evidence="1">Binds 1 Mn(2+) ion per subunit.</text>
</comment>
<comment type="pathway">
    <text evidence="1">Carbohydrate degradation; L-rhamnose degradation; glycerone phosphate from L-rhamnose: step 1/3.</text>
</comment>
<comment type="subcellular location">
    <subcellularLocation>
        <location evidence="1">Cytoplasm</location>
    </subcellularLocation>
</comment>
<comment type="similarity">
    <text evidence="1 2">Belongs to the rhamnose isomerase family.</text>
</comment>
<keyword id="KW-0963">Cytoplasm</keyword>
<keyword id="KW-0413">Isomerase</keyword>
<keyword id="KW-0464">Manganese</keyword>
<keyword id="KW-0479">Metal-binding</keyword>
<keyword id="KW-1185">Reference proteome</keyword>
<keyword id="KW-0684">Rhamnose metabolism</keyword>
<sequence>MNRAGNIEKAFELAREEYQAIGVDVDSALQRMRDVEISVHCWQGDDVKGFEGDDGALGNGLAVTGNYPGRARTIDELQSDLELAYSLIPGNHRLNLHALYGEFKGRVDRDEIEVEHFQGWIDWARDQKVRLDFNPSYFSHPNAADGFTLAHADSGIRQFWIDHGIACRKIAAAMGAAQSNPCINNFWVPDGYKDVPADRKAPRERLADSLDSIFATEYPAEQTLDAVECKLFGIGSESYVVGSHEFYMGYAMSRYKVLCLDAGHFHPTETISDKISAVMMYVPELLLHVSRGVRWDSDHVVTYSDELQSIMQEVVRGDYLGRVHIGLDFFDASINRVAAWAIGTRNALKAVLAALLEPTEQLRKMELEGDLTGRLALLEEQKTLPLGAVWNHYCQSVDVPAGSDWLENVRQYESQVLSQRSDSSALV</sequence>
<organism>
    <name type="scientific">Rhodopirellula baltica (strain DSM 10527 / NCIMB 13988 / SH1)</name>
    <dbReference type="NCBI Taxonomy" id="243090"/>
    <lineage>
        <taxon>Bacteria</taxon>
        <taxon>Pseudomonadati</taxon>
        <taxon>Planctomycetota</taxon>
        <taxon>Planctomycetia</taxon>
        <taxon>Pirellulales</taxon>
        <taxon>Pirellulaceae</taxon>
        <taxon>Rhodopirellula</taxon>
    </lineage>
</organism>
<name>RHAA_RHOBA</name>
<reference key="1">
    <citation type="journal article" date="2003" name="Proc. Natl. Acad. Sci. U.S.A.">
        <title>Complete genome sequence of the marine planctomycete Pirellula sp. strain 1.</title>
        <authorList>
            <person name="Gloeckner F.O."/>
            <person name="Kube M."/>
            <person name="Bauer M."/>
            <person name="Teeling H."/>
            <person name="Lombardot T."/>
            <person name="Ludwig W."/>
            <person name="Gade D."/>
            <person name="Beck A."/>
            <person name="Borzym K."/>
            <person name="Heitmann K."/>
            <person name="Rabus R."/>
            <person name="Schlesner H."/>
            <person name="Amann R."/>
            <person name="Reinhardt R."/>
        </authorList>
    </citation>
    <scope>NUCLEOTIDE SEQUENCE [LARGE SCALE GENOMIC DNA]</scope>
    <source>
        <strain>DSM 10527 / NCIMB 13988 / SH1</strain>
    </source>
</reference>
<proteinExistence type="inferred from homology"/>
<evidence type="ECO:0000255" key="1">
    <source>
        <dbReference type="HAMAP-Rule" id="MF_00541"/>
    </source>
</evidence>
<evidence type="ECO:0000305" key="2"/>
<gene>
    <name evidence="1" type="primary">rhaA</name>
    <name type="ordered locus">RB678</name>
</gene>
<feature type="chain" id="PRO_0000090563" description="L-rhamnose isomerase">
    <location>
        <begin position="1"/>
        <end position="427"/>
    </location>
</feature>
<feature type="binding site" evidence="1">
    <location>
        <position position="264"/>
    </location>
    <ligand>
        <name>Mn(2+)</name>
        <dbReference type="ChEBI" id="CHEBI:29035"/>
    </ligand>
</feature>
<feature type="binding site" evidence="1">
    <location>
        <position position="296"/>
    </location>
    <ligand>
        <name>Mn(2+)</name>
        <dbReference type="ChEBI" id="CHEBI:29035"/>
    </ligand>
</feature>
<feature type="binding site" evidence="1">
    <location>
        <position position="298"/>
    </location>
    <ligand>
        <name>Mn(2+)</name>
        <dbReference type="ChEBI" id="CHEBI:29035"/>
    </ligand>
</feature>
<accession>Q7UYE5</accession>
<dbReference type="EC" id="5.3.1.14" evidence="1"/>
<dbReference type="EMBL" id="BX294134">
    <property type="protein sequence ID" value="CAD71697.1"/>
    <property type="molecule type" value="Genomic_DNA"/>
</dbReference>
<dbReference type="RefSeq" id="NP_864023.1">
    <property type="nucleotide sequence ID" value="NC_005027.1"/>
</dbReference>
<dbReference type="RefSeq" id="WP_011118020.1">
    <property type="nucleotide sequence ID" value="NC_005027.1"/>
</dbReference>
<dbReference type="SMR" id="Q7UYE5"/>
<dbReference type="FunCoup" id="Q7UYE5">
    <property type="interactions" value="60"/>
</dbReference>
<dbReference type="STRING" id="243090.RB678"/>
<dbReference type="EnsemblBacteria" id="CAD71697">
    <property type="protein sequence ID" value="CAD71697"/>
    <property type="gene ID" value="RB678"/>
</dbReference>
<dbReference type="KEGG" id="rba:RB678"/>
<dbReference type="PATRIC" id="fig|243090.15.peg.326"/>
<dbReference type="eggNOG" id="COG4806">
    <property type="taxonomic scope" value="Bacteria"/>
</dbReference>
<dbReference type="HOGENOM" id="CLU_052790_0_0_0"/>
<dbReference type="InParanoid" id="Q7UYE5"/>
<dbReference type="OrthoDB" id="9766697at2"/>
<dbReference type="UniPathway" id="UPA00541">
    <property type="reaction ID" value="UER00601"/>
</dbReference>
<dbReference type="Proteomes" id="UP000001025">
    <property type="component" value="Chromosome"/>
</dbReference>
<dbReference type="GO" id="GO:0005737">
    <property type="term" value="C:cytoplasm"/>
    <property type="evidence" value="ECO:0007669"/>
    <property type="project" value="UniProtKB-SubCell"/>
</dbReference>
<dbReference type="GO" id="GO:0008740">
    <property type="term" value="F:L-rhamnose isomerase activity"/>
    <property type="evidence" value="ECO:0000318"/>
    <property type="project" value="GO_Central"/>
</dbReference>
<dbReference type="GO" id="GO:0030145">
    <property type="term" value="F:manganese ion binding"/>
    <property type="evidence" value="ECO:0007669"/>
    <property type="project" value="UniProtKB-UniRule"/>
</dbReference>
<dbReference type="GO" id="GO:0019324">
    <property type="term" value="P:L-lyxose metabolic process"/>
    <property type="evidence" value="ECO:0000318"/>
    <property type="project" value="GO_Central"/>
</dbReference>
<dbReference type="GO" id="GO:0019301">
    <property type="term" value="P:rhamnose catabolic process"/>
    <property type="evidence" value="ECO:0000318"/>
    <property type="project" value="GO_Central"/>
</dbReference>
<dbReference type="FunFam" id="3.20.20.150:FF:000006">
    <property type="entry name" value="L-rhamnose isomerase"/>
    <property type="match status" value="1"/>
</dbReference>
<dbReference type="Gene3D" id="3.20.20.150">
    <property type="entry name" value="Divalent-metal-dependent TIM barrel enzymes"/>
    <property type="match status" value="1"/>
</dbReference>
<dbReference type="HAMAP" id="MF_00541">
    <property type="entry name" value="RhaA"/>
    <property type="match status" value="1"/>
</dbReference>
<dbReference type="InterPro" id="IPR050337">
    <property type="entry name" value="L-rhamnose_isomerase"/>
</dbReference>
<dbReference type="InterPro" id="IPR009308">
    <property type="entry name" value="Rhamnose_isomerase"/>
</dbReference>
<dbReference type="InterPro" id="IPR036237">
    <property type="entry name" value="Xyl_isomerase-like_sf"/>
</dbReference>
<dbReference type="NCBIfam" id="NF002203">
    <property type="entry name" value="PRK01076.1"/>
    <property type="match status" value="1"/>
</dbReference>
<dbReference type="NCBIfam" id="TIGR01748">
    <property type="entry name" value="rhaA"/>
    <property type="match status" value="1"/>
</dbReference>
<dbReference type="PANTHER" id="PTHR30268">
    <property type="entry name" value="L-RHAMNOSE ISOMERASE"/>
    <property type="match status" value="1"/>
</dbReference>
<dbReference type="PANTHER" id="PTHR30268:SF0">
    <property type="entry name" value="L-RHAMNOSE ISOMERASE"/>
    <property type="match status" value="1"/>
</dbReference>
<dbReference type="Pfam" id="PF06134">
    <property type="entry name" value="RhaA"/>
    <property type="match status" value="1"/>
</dbReference>
<dbReference type="SUPFAM" id="SSF51658">
    <property type="entry name" value="Xylose isomerase-like"/>
    <property type="match status" value="1"/>
</dbReference>